<reference key="1">
    <citation type="journal article" date="2009" name="PLoS ONE">
        <title>Genome degradation in Brucella ovis corresponds with narrowing of its host range and tissue tropism.</title>
        <authorList>
            <person name="Tsolis R.M."/>
            <person name="Seshadri R."/>
            <person name="Santos R.L."/>
            <person name="Sangari F.J."/>
            <person name="Lobo J.M."/>
            <person name="de Jong M.F."/>
            <person name="Ren Q."/>
            <person name="Myers G."/>
            <person name="Brinkac L.M."/>
            <person name="Nelson W.C."/>
            <person name="Deboy R.T."/>
            <person name="Angiuoli S."/>
            <person name="Khouri H."/>
            <person name="Dimitrov G."/>
            <person name="Robinson J.R."/>
            <person name="Mulligan S."/>
            <person name="Walker R.L."/>
            <person name="Elzer P.E."/>
            <person name="Hassan K.A."/>
            <person name="Paulsen I.T."/>
        </authorList>
    </citation>
    <scope>NUCLEOTIDE SEQUENCE [LARGE SCALE GENOMIC DNA]</scope>
    <source>
        <strain>ATCC 25840 / 63/290 / NCTC 10512</strain>
    </source>
</reference>
<proteinExistence type="inferred from homology"/>
<accession>A5VTB3</accession>
<name>RBFA_BRUO2</name>
<protein>
    <recommendedName>
        <fullName evidence="1">Ribosome-binding factor A</fullName>
    </recommendedName>
</protein>
<comment type="function">
    <text evidence="1">One of several proteins that assist in the late maturation steps of the functional core of the 30S ribosomal subunit. Associates with free 30S ribosomal subunits (but not with 30S subunits that are part of 70S ribosomes or polysomes). Required for efficient processing of 16S rRNA. May interact with the 5'-terminal helix region of 16S rRNA.</text>
</comment>
<comment type="subunit">
    <text evidence="1">Monomer. Binds 30S ribosomal subunits, but not 50S ribosomal subunits or 70S ribosomes.</text>
</comment>
<comment type="subcellular location">
    <subcellularLocation>
        <location evidence="1">Cytoplasm</location>
    </subcellularLocation>
</comment>
<comment type="similarity">
    <text evidence="1">Belongs to the RbfA family.</text>
</comment>
<comment type="sequence caution" evidence="3">
    <conflict type="erroneous initiation">
        <sequence resource="EMBL-CDS" id="ABQ61349"/>
    </conflict>
    <text>Extended N-terminus.</text>
</comment>
<dbReference type="EMBL" id="CP000708">
    <property type="protein sequence ID" value="ABQ61349.1"/>
    <property type="status" value="ALT_INIT"/>
    <property type="molecule type" value="Genomic_DNA"/>
</dbReference>
<dbReference type="RefSeq" id="WP_002965228.1">
    <property type="nucleotide sequence ID" value="NC_009505.1"/>
</dbReference>
<dbReference type="SMR" id="A5VTB3"/>
<dbReference type="GeneID" id="97534581"/>
<dbReference type="KEGG" id="bov:BOV_2078"/>
<dbReference type="HOGENOM" id="CLU_089475_1_0_5"/>
<dbReference type="Proteomes" id="UP000006383">
    <property type="component" value="Chromosome I"/>
</dbReference>
<dbReference type="GO" id="GO:0005829">
    <property type="term" value="C:cytosol"/>
    <property type="evidence" value="ECO:0007669"/>
    <property type="project" value="TreeGrafter"/>
</dbReference>
<dbReference type="GO" id="GO:0043024">
    <property type="term" value="F:ribosomal small subunit binding"/>
    <property type="evidence" value="ECO:0007669"/>
    <property type="project" value="TreeGrafter"/>
</dbReference>
<dbReference type="GO" id="GO:0030490">
    <property type="term" value="P:maturation of SSU-rRNA"/>
    <property type="evidence" value="ECO:0007669"/>
    <property type="project" value="UniProtKB-UniRule"/>
</dbReference>
<dbReference type="Gene3D" id="3.30.300.20">
    <property type="match status" value="1"/>
</dbReference>
<dbReference type="HAMAP" id="MF_00003">
    <property type="entry name" value="RbfA"/>
    <property type="match status" value="1"/>
</dbReference>
<dbReference type="InterPro" id="IPR015946">
    <property type="entry name" value="KH_dom-like_a/b"/>
</dbReference>
<dbReference type="InterPro" id="IPR000238">
    <property type="entry name" value="RbfA"/>
</dbReference>
<dbReference type="InterPro" id="IPR023799">
    <property type="entry name" value="RbfA_dom_sf"/>
</dbReference>
<dbReference type="InterPro" id="IPR020053">
    <property type="entry name" value="Ribosome-bd_factorA_CS"/>
</dbReference>
<dbReference type="NCBIfam" id="NF001802">
    <property type="entry name" value="PRK00521.2-5"/>
    <property type="match status" value="1"/>
</dbReference>
<dbReference type="NCBIfam" id="TIGR00082">
    <property type="entry name" value="rbfA"/>
    <property type="match status" value="1"/>
</dbReference>
<dbReference type="PANTHER" id="PTHR33515">
    <property type="entry name" value="RIBOSOME-BINDING FACTOR A, CHLOROPLASTIC-RELATED"/>
    <property type="match status" value="1"/>
</dbReference>
<dbReference type="PANTHER" id="PTHR33515:SF1">
    <property type="entry name" value="RIBOSOME-BINDING FACTOR A, CHLOROPLASTIC-RELATED"/>
    <property type="match status" value="1"/>
</dbReference>
<dbReference type="Pfam" id="PF02033">
    <property type="entry name" value="RBFA"/>
    <property type="match status" value="1"/>
</dbReference>
<dbReference type="SUPFAM" id="SSF89919">
    <property type="entry name" value="Ribosome-binding factor A, RbfA"/>
    <property type="match status" value="1"/>
</dbReference>
<dbReference type="PROSITE" id="PS01319">
    <property type="entry name" value="RBFA"/>
    <property type="match status" value="1"/>
</dbReference>
<organism>
    <name type="scientific">Brucella ovis (strain ATCC 25840 / 63/290 / NCTC 10512)</name>
    <dbReference type="NCBI Taxonomy" id="444178"/>
    <lineage>
        <taxon>Bacteria</taxon>
        <taxon>Pseudomonadati</taxon>
        <taxon>Pseudomonadota</taxon>
        <taxon>Alphaproteobacteria</taxon>
        <taxon>Hyphomicrobiales</taxon>
        <taxon>Brucellaceae</taxon>
        <taxon>Brucella/Ochrobactrum group</taxon>
        <taxon>Brucella</taxon>
    </lineage>
</organism>
<sequence>MARSHDTKGSGGLSQRQLRVGEQVRHALAQVLQRGEIRDDLIERTVISVSEVRMSPDLKIATCFITPLGSADPQAVIKALASHAKFIRGRVAPSLAQMKYMPEFRFRPDTSFDNFSKIDALLRSPEVARDLSHDDDEDGGADEAPRNGDE</sequence>
<feature type="chain" id="PRO_0000321202" description="Ribosome-binding factor A">
    <location>
        <begin position="1"/>
        <end position="150"/>
    </location>
</feature>
<feature type="region of interest" description="Disordered" evidence="2">
    <location>
        <begin position="126"/>
        <end position="150"/>
    </location>
</feature>
<gene>
    <name evidence="1" type="primary">rbfA</name>
    <name type="ordered locus">BOV_2078</name>
</gene>
<evidence type="ECO:0000255" key="1">
    <source>
        <dbReference type="HAMAP-Rule" id="MF_00003"/>
    </source>
</evidence>
<evidence type="ECO:0000256" key="2">
    <source>
        <dbReference type="SAM" id="MobiDB-lite"/>
    </source>
</evidence>
<evidence type="ECO:0000305" key="3"/>
<keyword id="KW-0963">Cytoplasm</keyword>
<keyword id="KW-0690">Ribosome biogenesis</keyword>